<feature type="chain" id="PRO_0000077825" description="Mu-like prophage FluMu protein gp29">
    <location>
        <begin position="1"/>
        <end position="520"/>
    </location>
</feature>
<keyword id="KW-1185">Reference proteome</keyword>
<proteinExistence type="predicted"/>
<gene>
    <name type="ordered locus">HI_1501</name>
</gene>
<reference key="1">
    <citation type="journal article" date="1995" name="Science">
        <title>Whole-genome random sequencing and assembly of Haemophilus influenzae Rd.</title>
        <authorList>
            <person name="Fleischmann R.D."/>
            <person name="Adams M.D."/>
            <person name="White O."/>
            <person name="Clayton R.A."/>
            <person name="Kirkness E.F."/>
            <person name="Kerlavage A.R."/>
            <person name="Bult C.J."/>
            <person name="Tomb J.-F."/>
            <person name="Dougherty B.A."/>
            <person name="Merrick J.M."/>
            <person name="McKenney K."/>
            <person name="Sutton G.G."/>
            <person name="FitzHugh W."/>
            <person name="Fields C.A."/>
            <person name="Gocayne J.D."/>
            <person name="Scott J.D."/>
            <person name="Shirley R."/>
            <person name="Liu L.-I."/>
            <person name="Glodek A."/>
            <person name="Kelley J.M."/>
            <person name="Weidman J.F."/>
            <person name="Phillips C.A."/>
            <person name="Spriggs T."/>
            <person name="Hedblom E."/>
            <person name="Cotton M.D."/>
            <person name="Utterback T.R."/>
            <person name="Hanna M.C."/>
            <person name="Nguyen D.T."/>
            <person name="Saudek D.M."/>
            <person name="Brandon R.C."/>
            <person name="Fine L.D."/>
            <person name="Fritchman J.L."/>
            <person name="Fuhrmann J.L."/>
            <person name="Geoghagen N.S.M."/>
            <person name="Gnehm C.L."/>
            <person name="McDonald L.A."/>
            <person name="Small K.V."/>
            <person name="Fraser C.M."/>
            <person name="Smith H.O."/>
            <person name="Venter J.C."/>
        </authorList>
    </citation>
    <scope>NUCLEOTIDE SEQUENCE [LARGE SCALE GENOMIC DNA]</scope>
    <source>
        <strain>ATCC 51907 / DSM 11121 / KW20 / Rd</strain>
    </source>
</reference>
<accession>P44225</accession>
<dbReference type="EMBL" id="L42023">
    <property type="protein sequence ID" value="AAC23151.1"/>
    <property type="molecule type" value="Genomic_DNA"/>
</dbReference>
<dbReference type="PIR" id="A64033">
    <property type="entry name" value="A64033"/>
</dbReference>
<dbReference type="RefSeq" id="NP_439651.1">
    <property type="nucleotide sequence ID" value="NC_000907.1"/>
</dbReference>
<dbReference type="SMR" id="P44225"/>
<dbReference type="STRING" id="71421.HI_1501"/>
<dbReference type="EnsemblBacteria" id="AAC23151">
    <property type="protein sequence ID" value="AAC23151"/>
    <property type="gene ID" value="HI_1501"/>
</dbReference>
<dbReference type="KEGG" id="hin:HI_1501"/>
<dbReference type="PATRIC" id="fig|71421.8.peg.1571"/>
<dbReference type="eggNOG" id="COG4383">
    <property type="taxonomic scope" value="Bacteria"/>
</dbReference>
<dbReference type="HOGENOM" id="CLU_036594_0_1_6"/>
<dbReference type="OrthoDB" id="9797300at2"/>
<dbReference type="PhylomeDB" id="P44225"/>
<dbReference type="BioCyc" id="HINF71421:G1GJ1-1524-MONOMER"/>
<dbReference type="Proteomes" id="UP000000579">
    <property type="component" value="Chromosome"/>
</dbReference>
<dbReference type="InterPro" id="IPR009279">
    <property type="entry name" value="Portal_Mu"/>
</dbReference>
<dbReference type="Pfam" id="PF06074">
    <property type="entry name" value="Portal_Mu"/>
    <property type="match status" value="1"/>
</dbReference>
<protein>
    <recommendedName>
        <fullName>Mu-like prophage FluMu protein gp29</fullName>
    </recommendedName>
</protein>
<sequence>MQSRILDIHGNPFRFEADMQTESESRLMPLQYHYSDHPASGLTPAKAARILRAAEQGDLVAQAELAEDMEEKDTHILSELSKRRGAITAVDWQIKPPRNATPEEQRDAEMLQEILEDAVWLDDCIFDATDAILKGFSSQEIEWEQGLVGGLKLIKNVHWRDPAWFMTPAYQRNSLRLRDGTPEGAEMQQFGWVKHVARAKTGYLSRIGLVRTLVWPFIFKNYSVRDFAEFLEIYGLPLRLGKYPEGATDKEKQTLLRAVMSIGHNAGGIIPRGMELEFEKAADGSDSTFMAMIEWAEKSASKAILGGTLTSQADGATSTNALGNVHNDVRLEIRNADLKRLAATLTRDLVYPLYALNCKSFNDARRIPRFEFDVAESEDLNAFADGLNKLVDIGFRIPKQWAHDKLQVPIATENEEVLAKSFQNPTAYMHSKADGKMAVLSVQPDPEDLLDNLEPTAEDYQAVIDPLLKPVVEALQKGGYEFAQEKLAILYAEMNDEELETLLTRAIFVSDLLGRANAKR</sequence>
<evidence type="ECO:0000305" key="1"/>
<comment type="similarity">
    <text evidence="1">To phage Mu protein gp29.</text>
</comment>
<organism>
    <name type="scientific">Haemophilus influenzae (strain ATCC 51907 / DSM 11121 / KW20 / Rd)</name>
    <dbReference type="NCBI Taxonomy" id="71421"/>
    <lineage>
        <taxon>Bacteria</taxon>
        <taxon>Pseudomonadati</taxon>
        <taxon>Pseudomonadota</taxon>
        <taxon>Gammaproteobacteria</taxon>
        <taxon>Pasteurellales</taxon>
        <taxon>Pasteurellaceae</taxon>
        <taxon>Haemophilus</taxon>
    </lineage>
</organism>
<name>VG29_HAEIN</name>